<evidence type="ECO:0000250" key="1"/>
<evidence type="ECO:0000305" key="2"/>
<comment type="function">
    <text evidence="1">Involved in the reduction of the double bond between C-4 and C-5 during phthiocerol dimycocerosates (DIM A) and glycosylated phenolphthiocerol dimycocerosates (PGL) biosynthesis.</text>
</comment>
<comment type="similarity">
    <text evidence="2">Belongs to the saccharopine dehydrogenase family. Enoyl reductase subfamily.</text>
</comment>
<keyword id="KW-0444">Lipid biosynthesis</keyword>
<keyword id="KW-0443">Lipid metabolism</keyword>
<keyword id="KW-0560">Oxidoreductase</keyword>
<protein>
    <recommendedName>
        <fullName>Trans-acting enoyl reductase</fullName>
        <ecNumber>1.3.1.-</ecNumber>
    </recommendedName>
</protein>
<proteinExistence type="inferred from homology"/>
<name>TAER_MYCUA</name>
<organism>
    <name type="scientific">Mycobacterium ulcerans (strain Agy99)</name>
    <dbReference type="NCBI Taxonomy" id="362242"/>
    <lineage>
        <taxon>Bacteria</taxon>
        <taxon>Bacillati</taxon>
        <taxon>Actinomycetota</taxon>
        <taxon>Actinomycetes</taxon>
        <taxon>Mycobacteriales</taxon>
        <taxon>Mycobacteriaceae</taxon>
        <taxon>Mycobacterium</taxon>
        <taxon>Mycobacterium ulcerans group</taxon>
    </lineage>
</organism>
<accession>A0PQ21</accession>
<reference key="1">
    <citation type="journal article" date="2007" name="Genome Res.">
        <title>Reductive evolution and niche adaptation inferred from the genome of Mycobacterium ulcerans, the causative agent of Buruli ulcer.</title>
        <authorList>
            <person name="Stinear T.P."/>
            <person name="Seemann T."/>
            <person name="Pidot S."/>
            <person name="Frigui W."/>
            <person name="Reysset G."/>
            <person name="Garnier T."/>
            <person name="Meurice G."/>
            <person name="Simon D."/>
            <person name="Bouchier C."/>
            <person name="Ma L."/>
            <person name="Tichit M."/>
            <person name="Porter J.L."/>
            <person name="Ryan J."/>
            <person name="Johnson P.D.R."/>
            <person name="Davies J.K."/>
            <person name="Jenkin G.A."/>
            <person name="Small P.L.C."/>
            <person name="Jones L.M."/>
            <person name="Tekaia F."/>
            <person name="Laval F."/>
            <person name="Daffe M."/>
            <person name="Parkhill J."/>
            <person name="Cole S.T."/>
        </authorList>
    </citation>
    <scope>NUCLEOTIDE SEQUENCE [LARGE SCALE GENOMIC DNA]</scope>
    <source>
        <strain>Agy99</strain>
    </source>
</reference>
<sequence length="418" mass="45062">MSSAQREFEIVLYGATGFSGMLTGQHLAQRDTNARIALAGRSPQRLRAVRDKLGPLASDWPLVVADASQPATLEEMATRAQVILTTVGPYTRYGLPLVAACAKAGTDYADLTGELMFCRNSIDLYHKQAADTGARIVLACGFDSIPSDLNVHHLYRRAAEDGTGELAETNLVLRSFSQRWASGGSVATYSEAMRTASSDPEAYRLVNDPYTLTTDRSAEPDLGPQPDFSMRRGRDLAPELAGFWTGAFVQGPFNTRIVRRSNALQDWAYGKQFRYSETMSLGRSFAAPIASAAVTGAIAGGIGLGNKYFSRLPQRALERVTPKPGTGPSQKSRERGHYRCETYTTTTTGARYLATFAHNVDAYASTAVLLGESGLALALDRDRLSELRGVLTPAAAMGDALLARLPQTGVVVSATRLH</sequence>
<gene>
    <name type="ordered locus">MUL_2000</name>
</gene>
<feature type="chain" id="PRO_0000304696" description="Trans-acting enoyl reductase">
    <location>
        <begin position="1"/>
        <end position="418"/>
    </location>
</feature>
<dbReference type="EC" id="1.3.1.-"/>
<dbReference type="EMBL" id="CP000325">
    <property type="protein sequence ID" value="ABL04440.1"/>
    <property type="molecule type" value="Genomic_DNA"/>
</dbReference>
<dbReference type="RefSeq" id="WP_011740059.1">
    <property type="nucleotide sequence ID" value="NC_008611.1"/>
</dbReference>
<dbReference type="KEGG" id="mul:MUL_2000"/>
<dbReference type="eggNOG" id="COG3268">
    <property type="taxonomic scope" value="Bacteria"/>
</dbReference>
<dbReference type="HOGENOM" id="CLU_031002_0_2_11"/>
<dbReference type="Proteomes" id="UP000000765">
    <property type="component" value="Chromosome"/>
</dbReference>
<dbReference type="GO" id="GO:0005886">
    <property type="term" value="C:plasma membrane"/>
    <property type="evidence" value="ECO:0007669"/>
    <property type="project" value="TreeGrafter"/>
</dbReference>
<dbReference type="GO" id="GO:0016491">
    <property type="term" value="F:oxidoreductase activity"/>
    <property type="evidence" value="ECO:0007669"/>
    <property type="project" value="UniProtKB-KW"/>
</dbReference>
<dbReference type="GO" id="GO:0009247">
    <property type="term" value="P:glycolipid biosynthetic process"/>
    <property type="evidence" value="ECO:0007669"/>
    <property type="project" value="TreeGrafter"/>
</dbReference>
<dbReference type="FunFam" id="3.40.50.720:FF:000413">
    <property type="entry name" value="Trans-acting enoyl reductase"/>
    <property type="match status" value="1"/>
</dbReference>
<dbReference type="Gene3D" id="3.40.50.720">
    <property type="entry name" value="NAD(P)-binding Rossmann-like Domain"/>
    <property type="match status" value="1"/>
</dbReference>
<dbReference type="InterPro" id="IPR036291">
    <property type="entry name" value="NAD(P)-bd_dom_sf"/>
</dbReference>
<dbReference type="InterPro" id="IPR051276">
    <property type="entry name" value="Saccharopine_DH-like_oxidrdct"/>
</dbReference>
<dbReference type="InterPro" id="IPR005097">
    <property type="entry name" value="Sacchrp_dh_NADP-bd"/>
</dbReference>
<dbReference type="PANTHER" id="PTHR12286">
    <property type="entry name" value="SACCHAROPINE DEHYDROGENASE-LIKE OXIDOREDUCTASE"/>
    <property type="match status" value="1"/>
</dbReference>
<dbReference type="PANTHER" id="PTHR12286:SF5">
    <property type="entry name" value="SACCHAROPINE DEHYDROGENASE-LIKE OXIDOREDUCTASE"/>
    <property type="match status" value="1"/>
</dbReference>
<dbReference type="Pfam" id="PF03435">
    <property type="entry name" value="Sacchrp_dh_NADP"/>
    <property type="match status" value="1"/>
</dbReference>
<dbReference type="SUPFAM" id="SSF51735">
    <property type="entry name" value="NAD(P)-binding Rossmann-fold domains"/>
    <property type="match status" value="1"/>
</dbReference>